<feature type="chain" id="PRO_0000286875" description="Alpha/beta-tubulin-N-acetyltransferase 9">
    <location>
        <begin position="1"/>
        <end position="241"/>
    </location>
</feature>
<feature type="domain" description="N-acetyltransferase">
    <location>
        <begin position="34"/>
        <end position="181"/>
    </location>
</feature>
<feature type="sequence conflict" description="In Ref. 1; BAE28311." evidence="2" ref="1">
    <original>V</original>
    <variation>A</variation>
    <location>
        <position position="15"/>
    </location>
</feature>
<feature type="sequence conflict" description="In Ref. 1; BAC25613." evidence="2" ref="1">
    <original>E</original>
    <variation>K</variation>
    <location>
        <position position="83"/>
    </location>
</feature>
<name>NAT9_MOUSE</name>
<accession>Q3UG98</accession>
<accession>Q8C1G5</accession>
<accession>Q9D151</accession>
<dbReference type="EC" id="2.3.1.308" evidence="1"/>
<dbReference type="EMBL" id="AK003948">
    <property type="protein sequence ID" value="BAB23087.1"/>
    <property type="molecule type" value="mRNA"/>
</dbReference>
<dbReference type="EMBL" id="AK020083">
    <property type="protein sequence ID" value="BAC25613.1"/>
    <property type="status" value="ALT_FRAME"/>
    <property type="molecule type" value="mRNA"/>
</dbReference>
<dbReference type="EMBL" id="AK082469">
    <property type="protein sequence ID" value="BAC38501.1"/>
    <property type="molecule type" value="mRNA"/>
</dbReference>
<dbReference type="EMBL" id="AK148048">
    <property type="protein sequence ID" value="BAE28311.1"/>
    <property type="molecule type" value="mRNA"/>
</dbReference>
<dbReference type="EMBL" id="AL606487">
    <property type="status" value="NOT_ANNOTATED_CDS"/>
    <property type="molecule type" value="Genomic_DNA"/>
</dbReference>
<dbReference type="EMBL" id="BC011315">
    <property type="protein sequence ID" value="AAH11315.1"/>
    <property type="molecule type" value="mRNA"/>
</dbReference>
<dbReference type="CCDS" id="CCDS25622.1"/>
<dbReference type="RefSeq" id="NP_001349818.1">
    <property type="nucleotide sequence ID" value="NM_001362889.1"/>
</dbReference>
<dbReference type="RefSeq" id="NP_001349819.1">
    <property type="nucleotide sequence ID" value="NM_001362890.1"/>
</dbReference>
<dbReference type="RefSeq" id="NP_079676.1">
    <property type="nucleotide sequence ID" value="NM_025400.4"/>
</dbReference>
<dbReference type="RefSeq" id="XP_006533984.1">
    <property type="nucleotide sequence ID" value="XM_006533921.3"/>
</dbReference>
<dbReference type="RefSeq" id="XP_006533985.1">
    <property type="nucleotide sequence ID" value="XM_006533922.2"/>
</dbReference>
<dbReference type="SMR" id="Q3UG98"/>
<dbReference type="BioGRID" id="211273">
    <property type="interactions" value="4"/>
</dbReference>
<dbReference type="FunCoup" id="Q3UG98">
    <property type="interactions" value="297"/>
</dbReference>
<dbReference type="MINT" id="Q3UG98"/>
<dbReference type="STRING" id="10090.ENSMUSP00000099329"/>
<dbReference type="GlyGen" id="Q3UG98">
    <property type="glycosylation" value="1 site, 1 O-linked glycan (1 site)"/>
</dbReference>
<dbReference type="iPTMnet" id="Q3UG98"/>
<dbReference type="PhosphoSitePlus" id="Q3UG98"/>
<dbReference type="SwissPalm" id="Q3UG98"/>
<dbReference type="PaxDb" id="10090-ENSMUSP00000099329"/>
<dbReference type="PeptideAtlas" id="Q3UG98"/>
<dbReference type="ProteomicsDB" id="252778"/>
<dbReference type="Pumba" id="Q3UG98"/>
<dbReference type="Antibodypedia" id="19466">
    <property type="antibodies" value="65 antibodies from 19 providers"/>
</dbReference>
<dbReference type="DNASU" id="66176"/>
<dbReference type="Ensembl" id="ENSMUST00000103038.8">
    <property type="protein sequence ID" value="ENSMUSP00000099327.2"/>
    <property type="gene ID" value="ENSMUSG00000015542.18"/>
</dbReference>
<dbReference type="Ensembl" id="ENSMUST00000103039.2">
    <property type="protein sequence ID" value="ENSMUSP00000099328.2"/>
    <property type="gene ID" value="ENSMUSG00000015542.18"/>
</dbReference>
<dbReference type="Ensembl" id="ENSMUST00000103040.11">
    <property type="protein sequence ID" value="ENSMUSP00000099329.5"/>
    <property type="gene ID" value="ENSMUSG00000015542.18"/>
</dbReference>
<dbReference type="Ensembl" id="ENSMUST00000103041.8">
    <property type="protein sequence ID" value="ENSMUSP00000099330.2"/>
    <property type="gene ID" value="ENSMUSG00000015542.18"/>
</dbReference>
<dbReference type="GeneID" id="66176"/>
<dbReference type="KEGG" id="mmu:66176"/>
<dbReference type="UCSC" id="uc007mgr.1">
    <property type="organism name" value="mouse"/>
</dbReference>
<dbReference type="AGR" id="MGI:1913426"/>
<dbReference type="CTD" id="26151"/>
<dbReference type="MGI" id="MGI:1913426">
    <property type="gene designation" value="Nat9"/>
</dbReference>
<dbReference type="VEuPathDB" id="HostDB:ENSMUSG00000015542"/>
<dbReference type="eggNOG" id="KOG4135">
    <property type="taxonomic scope" value="Eukaryota"/>
</dbReference>
<dbReference type="GeneTree" id="ENSGT00390000012745"/>
<dbReference type="HOGENOM" id="CLU_073102_1_1_1"/>
<dbReference type="InParanoid" id="Q3UG98"/>
<dbReference type="OMA" id="WHVPRYH"/>
<dbReference type="OrthoDB" id="5043642at2759"/>
<dbReference type="PhylomeDB" id="Q3UG98"/>
<dbReference type="TreeFam" id="TF315021"/>
<dbReference type="BioGRID-ORCS" id="66176">
    <property type="hits" value="4 hits in 81 CRISPR screens"/>
</dbReference>
<dbReference type="PRO" id="PR:Q3UG98"/>
<dbReference type="Proteomes" id="UP000000589">
    <property type="component" value="Chromosome 11"/>
</dbReference>
<dbReference type="RNAct" id="Q3UG98">
    <property type="molecule type" value="protein"/>
</dbReference>
<dbReference type="Bgee" id="ENSMUSG00000015542">
    <property type="expression patterns" value="Expressed in spermatocyte and 247 other cell types or tissues"/>
</dbReference>
<dbReference type="GO" id="GO:0032991">
    <property type="term" value="C:protein-containing complex"/>
    <property type="evidence" value="ECO:0007669"/>
    <property type="project" value="Ensembl"/>
</dbReference>
<dbReference type="GO" id="GO:0120519">
    <property type="term" value="F:tubulin N-terminal-methionine acetyltransferase activity"/>
    <property type="evidence" value="ECO:0007669"/>
    <property type="project" value="RHEA"/>
</dbReference>
<dbReference type="FunFam" id="3.40.630.30:FF:000040">
    <property type="entry name" value="N-acetyltransferase 9 (putative)"/>
    <property type="match status" value="1"/>
</dbReference>
<dbReference type="Gene3D" id="3.40.630.30">
    <property type="match status" value="1"/>
</dbReference>
<dbReference type="InterPro" id="IPR016181">
    <property type="entry name" value="Acyl_CoA_acyltransferase"/>
</dbReference>
<dbReference type="InterPro" id="IPR000182">
    <property type="entry name" value="GNAT_dom"/>
</dbReference>
<dbReference type="InterPro" id="IPR039135">
    <property type="entry name" value="NAT9-like"/>
</dbReference>
<dbReference type="PANTHER" id="PTHR13256:SF16">
    <property type="entry name" value="ALPHA_BETA-TUBULIN-N-ACETYLTRANSFERASE 9"/>
    <property type="match status" value="1"/>
</dbReference>
<dbReference type="PANTHER" id="PTHR13256">
    <property type="entry name" value="N-ACETYLTRANSFERASE 9"/>
    <property type="match status" value="1"/>
</dbReference>
<dbReference type="Pfam" id="PF13302">
    <property type="entry name" value="Acetyltransf_3"/>
    <property type="match status" value="1"/>
</dbReference>
<dbReference type="SUPFAM" id="SSF55729">
    <property type="entry name" value="Acyl-CoA N-acyltransferases (Nat)"/>
    <property type="match status" value="1"/>
</dbReference>
<evidence type="ECO:0000250" key="1">
    <source>
        <dbReference type="UniProtKB" id="Q9BTE0"/>
    </source>
</evidence>
<evidence type="ECO:0000305" key="2"/>
<keyword id="KW-0012">Acyltransferase</keyword>
<keyword id="KW-0903">Direct protein sequencing</keyword>
<keyword id="KW-1185">Reference proteome</keyword>
<keyword id="KW-0808">Transferase</keyword>
<organism>
    <name type="scientific">Mus musculus</name>
    <name type="common">Mouse</name>
    <dbReference type="NCBI Taxonomy" id="10090"/>
    <lineage>
        <taxon>Eukaryota</taxon>
        <taxon>Metazoa</taxon>
        <taxon>Chordata</taxon>
        <taxon>Craniata</taxon>
        <taxon>Vertebrata</taxon>
        <taxon>Euteleostomi</taxon>
        <taxon>Mammalia</taxon>
        <taxon>Eutheria</taxon>
        <taxon>Euarchontoglires</taxon>
        <taxon>Glires</taxon>
        <taxon>Rodentia</taxon>
        <taxon>Myomorpha</taxon>
        <taxon>Muroidea</taxon>
        <taxon>Muridae</taxon>
        <taxon>Murinae</taxon>
        <taxon>Mus</taxon>
        <taxon>Mus</taxon>
    </lineage>
</organism>
<gene>
    <name type="primary">Nat9</name>
</gene>
<sequence>MKLNQNTMLVGKKVVLVPYTSEHVPRYHEWMKSEELRHLTASEQLTLQQEYEMQCSWCEDEDKCTFIVLDAEKWQAQPRPPEESCMVGDVNLFLTDLEDPTLGEIEVMIAEPSYRRQGLGTEASLLIMSYGVTKLGLTKFEAKIGQENEPSIRMFQKLHFKQVAMSNVFQEVTLRLAVSEPERKWILEQTSHMEERPYRTRKAEPVTATLSEQKSWNCPLPRPDGCMGDTSAVSSVCARLS</sequence>
<proteinExistence type="evidence at protein level"/>
<protein>
    <recommendedName>
        <fullName evidence="1">Alpha/beta-tubulin-N-acetyltransferase 9</fullName>
        <ecNumber evidence="1">2.3.1.308</ecNumber>
    </recommendedName>
</protein>
<comment type="function">
    <text evidence="1">N-acetyltransferase that mediates the acetylation of the N-terminal residues of alpha- and beta-tubulin.</text>
</comment>
<comment type="catalytic activity">
    <reaction evidence="1">
        <text>N-terminal L-methionyl-[tubulin] + acetyl-CoA = N-terminal N(alpha)-acetyl-L-methionyl-[tubulin] + CoA + H(+)</text>
        <dbReference type="Rhea" id="RHEA:69607"/>
        <dbReference type="Rhea" id="RHEA-COMP:17729"/>
        <dbReference type="Rhea" id="RHEA-COMP:17730"/>
        <dbReference type="ChEBI" id="CHEBI:15378"/>
        <dbReference type="ChEBI" id="CHEBI:57287"/>
        <dbReference type="ChEBI" id="CHEBI:57288"/>
        <dbReference type="ChEBI" id="CHEBI:64731"/>
        <dbReference type="ChEBI" id="CHEBI:133414"/>
        <dbReference type="EC" id="2.3.1.308"/>
    </reaction>
</comment>
<comment type="similarity">
    <text evidence="2">Belongs to the acetyltransferase family. GNAT subfamily.</text>
</comment>
<comment type="sequence caution" evidence="2">
    <conflict type="frameshift">
        <sequence resource="EMBL-CDS" id="BAC25613"/>
    </conflict>
</comment>
<reference key="1">
    <citation type="journal article" date="2005" name="Science">
        <title>The transcriptional landscape of the mammalian genome.</title>
        <authorList>
            <person name="Carninci P."/>
            <person name="Kasukawa T."/>
            <person name="Katayama S."/>
            <person name="Gough J."/>
            <person name="Frith M.C."/>
            <person name="Maeda N."/>
            <person name="Oyama R."/>
            <person name="Ravasi T."/>
            <person name="Lenhard B."/>
            <person name="Wells C."/>
            <person name="Kodzius R."/>
            <person name="Shimokawa K."/>
            <person name="Bajic V.B."/>
            <person name="Brenner S.E."/>
            <person name="Batalov S."/>
            <person name="Forrest A.R."/>
            <person name="Zavolan M."/>
            <person name="Davis M.J."/>
            <person name="Wilming L.G."/>
            <person name="Aidinis V."/>
            <person name="Allen J.E."/>
            <person name="Ambesi-Impiombato A."/>
            <person name="Apweiler R."/>
            <person name="Aturaliya R.N."/>
            <person name="Bailey T.L."/>
            <person name="Bansal M."/>
            <person name="Baxter L."/>
            <person name="Beisel K.W."/>
            <person name="Bersano T."/>
            <person name="Bono H."/>
            <person name="Chalk A.M."/>
            <person name="Chiu K.P."/>
            <person name="Choudhary V."/>
            <person name="Christoffels A."/>
            <person name="Clutterbuck D.R."/>
            <person name="Crowe M.L."/>
            <person name="Dalla E."/>
            <person name="Dalrymple B.P."/>
            <person name="de Bono B."/>
            <person name="Della Gatta G."/>
            <person name="di Bernardo D."/>
            <person name="Down T."/>
            <person name="Engstrom P."/>
            <person name="Fagiolini M."/>
            <person name="Faulkner G."/>
            <person name="Fletcher C.F."/>
            <person name="Fukushima T."/>
            <person name="Furuno M."/>
            <person name="Futaki S."/>
            <person name="Gariboldi M."/>
            <person name="Georgii-Hemming P."/>
            <person name="Gingeras T.R."/>
            <person name="Gojobori T."/>
            <person name="Green R.E."/>
            <person name="Gustincich S."/>
            <person name="Harbers M."/>
            <person name="Hayashi Y."/>
            <person name="Hensch T.K."/>
            <person name="Hirokawa N."/>
            <person name="Hill D."/>
            <person name="Huminiecki L."/>
            <person name="Iacono M."/>
            <person name="Ikeo K."/>
            <person name="Iwama A."/>
            <person name="Ishikawa T."/>
            <person name="Jakt M."/>
            <person name="Kanapin A."/>
            <person name="Katoh M."/>
            <person name="Kawasawa Y."/>
            <person name="Kelso J."/>
            <person name="Kitamura H."/>
            <person name="Kitano H."/>
            <person name="Kollias G."/>
            <person name="Krishnan S.P."/>
            <person name="Kruger A."/>
            <person name="Kummerfeld S.K."/>
            <person name="Kurochkin I.V."/>
            <person name="Lareau L.F."/>
            <person name="Lazarevic D."/>
            <person name="Lipovich L."/>
            <person name="Liu J."/>
            <person name="Liuni S."/>
            <person name="McWilliam S."/>
            <person name="Madan Babu M."/>
            <person name="Madera M."/>
            <person name="Marchionni L."/>
            <person name="Matsuda H."/>
            <person name="Matsuzawa S."/>
            <person name="Miki H."/>
            <person name="Mignone F."/>
            <person name="Miyake S."/>
            <person name="Morris K."/>
            <person name="Mottagui-Tabar S."/>
            <person name="Mulder N."/>
            <person name="Nakano N."/>
            <person name="Nakauchi H."/>
            <person name="Ng P."/>
            <person name="Nilsson R."/>
            <person name="Nishiguchi S."/>
            <person name="Nishikawa S."/>
            <person name="Nori F."/>
            <person name="Ohara O."/>
            <person name="Okazaki Y."/>
            <person name="Orlando V."/>
            <person name="Pang K.C."/>
            <person name="Pavan W.J."/>
            <person name="Pavesi G."/>
            <person name="Pesole G."/>
            <person name="Petrovsky N."/>
            <person name="Piazza S."/>
            <person name="Reed J."/>
            <person name="Reid J.F."/>
            <person name="Ring B.Z."/>
            <person name="Ringwald M."/>
            <person name="Rost B."/>
            <person name="Ruan Y."/>
            <person name="Salzberg S.L."/>
            <person name="Sandelin A."/>
            <person name="Schneider C."/>
            <person name="Schoenbach C."/>
            <person name="Sekiguchi K."/>
            <person name="Semple C.A."/>
            <person name="Seno S."/>
            <person name="Sessa L."/>
            <person name="Sheng Y."/>
            <person name="Shibata Y."/>
            <person name="Shimada H."/>
            <person name="Shimada K."/>
            <person name="Silva D."/>
            <person name="Sinclair B."/>
            <person name="Sperling S."/>
            <person name="Stupka E."/>
            <person name="Sugiura K."/>
            <person name="Sultana R."/>
            <person name="Takenaka Y."/>
            <person name="Taki K."/>
            <person name="Tammoja K."/>
            <person name="Tan S.L."/>
            <person name="Tang S."/>
            <person name="Taylor M.S."/>
            <person name="Tegner J."/>
            <person name="Teichmann S.A."/>
            <person name="Ueda H.R."/>
            <person name="van Nimwegen E."/>
            <person name="Verardo R."/>
            <person name="Wei C.L."/>
            <person name="Yagi K."/>
            <person name="Yamanishi H."/>
            <person name="Zabarovsky E."/>
            <person name="Zhu S."/>
            <person name="Zimmer A."/>
            <person name="Hide W."/>
            <person name="Bult C."/>
            <person name="Grimmond S.M."/>
            <person name="Teasdale R.D."/>
            <person name="Liu E.T."/>
            <person name="Brusic V."/>
            <person name="Quackenbush J."/>
            <person name="Wahlestedt C."/>
            <person name="Mattick J.S."/>
            <person name="Hume D.A."/>
            <person name="Kai C."/>
            <person name="Sasaki D."/>
            <person name="Tomaru Y."/>
            <person name="Fukuda S."/>
            <person name="Kanamori-Katayama M."/>
            <person name="Suzuki M."/>
            <person name="Aoki J."/>
            <person name="Arakawa T."/>
            <person name="Iida J."/>
            <person name="Imamura K."/>
            <person name="Itoh M."/>
            <person name="Kato T."/>
            <person name="Kawaji H."/>
            <person name="Kawagashira N."/>
            <person name="Kawashima T."/>
            <person name="Kojima M."/>
            <person name="Kondo S."/>
            <person name="Konno H."/>
            <person name="Nakano K."/>
            <person name="Ninomiya N."/>
            <person name="Nishio T."/>
            <person name="Okada M."/>
            <person name="Plessy C."/>
            <person name="Shibata K."/>
            <person name="Shiraki T."/>
            <person name="Suzuki S."/>
            <person name="Tagami M."/>
            <person name="Waki K."/>
            <person name="Watahiki A."/>
            <person name="Okamura-Oho Y."/>
            <person name="Suzuki H."/>
            <person name="Kawai J."/>
            <person name="Hayashizaki Y."/>
        </authorList>
    </citation>
    <scope>NUCLEOTIDE SEQUENCE [LARGE SCALE MRNA]</scope>
    <source>
        <strain>C57BL/6J</strain>
        <tissue>Cerebellum</tissue>
        <tissue>Embryo</tissue>
        <tissue>Testis</tissue>
    </source>
</reference>
<reference key="2">
    <citation type="journal article" date="2009" name="PLoS Biol.">
        <title>Lineage-specific biology revealed by a finished genome assembly of the mouse.</title>
        <authorList>
            <person name="Church D.M."/>
            <person name="Goodstadt L."/>
            <person name="Hillier L.W."/>
            <person name="Zody M.C."/>
            <person name="Goldstein S."/>
            <person name="She X."/>
            <person name="Bult C.J."/>
            <person name="Agarwala R."/>
            <person name="Cherry J.L."/>
            <person name="DiCuccio M."/>
            <person name="Hlavina W."/>
            <person name="Kapustin Y."/>
            <person name="Meric P."/>
            <person name="Maglott D."/>
            <person name="Birtle Z."/>
            <person name="Marques A.C."/>
            <person name="Graves T."/>
            <person name="Zhou S."/>
            <person name="Teague B."/>
            <person name="Potamousis K."/>
            <person name="Churas C."/>
            <person name="Place M."/>
            <person name="Herschleb J."/>
            <person name="Runnheim R."/>
            <person name="Forrest D."/>
            <person name="Amos-Landgraf J."/>
            <person name="Schwartz D.C."/>
            <person name="Cheng Z."/>
            <person name="Lindblad-Toh K."/>
            <person name="Eichler E.E."/>
            <person name="Ponting C.P."/>
        </authorList>
    </citation>
    <scope>NUCLEOTIDE SEQUENCE [LARGE SCALE GENOMIC DNA]</scope>
    <source>
        <strain>C57BL/6J</strain>
    </source>
</reference>
<reference key="3">
    <citation type="journal article" date="2004" name="Genome Res.">
        <title>The status, quality, and expansion of the NIH full-length cDNA project: the Mammalian Gene Collection (MGC).</title>
        <authorList>
            <consortium name="The MGC Project Team"/>
        </authorList>
    </citation>
    <scope>NUCLEOTIDE SEQUENCE [LARGE SCALE MRNA]</scope>
    <source>
        <strain>Czech II</strain>
        <tissue>Mammary tumor</tissue>
    </source>
</reference>
<reference key="4">
    <citation type="submission" date="2009-01" db="UniProtKB">
        <authorList>
            <person name="Lubec G."/>
            <person name="Sunyer B."/>
            <person name="Chen W.-Q."/>
        </authorList>
    </citation>
    <scope>PROTEIN SEQUENCE OF 215-241</scope>
    <scope>IDENTIFICATION BY MASS SPECTROMETRY</scope>
    <source>
        <strain>OF1</strain>
        <tissue>Hippocampus</tissue>
    </source>
</reference>
<reference key="5">
    <citation type="journal article" date="2010" name="Cell">
        <title>A tissue-specific atlas of mouse protein phosphorylation and expression.</title>
        <authorList>
            <person name="Huttlin E.L."/>
            <person name="Jedrychowski M.P."/>
            <person name="Elias J.E."/>
            <person name="Goswami T."/>
            <person name="Rad R."/>
            <person name="Beausoleil S.A."/>
            <person name="Villen J."/>
            <person name="Haas W."/>
            <person name="Sowa M.E."/>
            <person name="Gygi S.P."/>
        </authorList>
    </citation>
    <scope>IDENTIFICATION BY MASS SPECTROMETRY [LARGE SCALE ANALYSIS]</scope>
    <source>
        <tissue>Liver</tissue>
        <tissue>Spleen</tissue>
        <tissue>Testis</tissue>
    </source>
</reference>